<reference key="1">
    <citation type="submission" date="2008-10" db="EMBL/GenBank/DDBJ databases">
        <title>Genome sequence of Clostridium botulinum A2 Kyoto.</title>
        <authorList>
            <person name="Shrivastava S."/>
            <person name="Brinkac L.M."/>
            <person name="Brown J.L."/>
            <person name="Bruce D."/>
            <person name="Detter C.C."/>
            <person name="Johnson E.A."/>
            <person name="Munk C.A."/>
            <person name="Smith L.A."/>
            <person name="Smith T.J."/>
            <person name="Sutton G."/>
            <person name="Brettin T.S."/>
        </authorList>
    </citation>
    <scope>NUCLEOTIDE SEQUENCE [LARGE SCALE GENOMIC DNA]</scope>
    <source>
        <strain>Kyoto / Type A2</strain>
    </source>
</reference>
<dbReference type="EC" id="1.1.1.25" evidence="1"/>
<dbReference type="EMBL" id="CP001581">
    <property type="protein sequence ID" value="ACO85685.1"/>
    <property type="molecule type" value="Genomic_DNA"/>
</dbReference>
<dbReference type="RefSeq" id="WP_011986860.1">
    <property type="nucleotide sequence ID" value="NC_012563.1"/>
</dbReference>
<dbReference type="SMR" id="C1FSW2"/>
<dbReference type="GeneID" id="5187986"/>
<dbReference type="KEGG" id="cby:CLM_2844"/>
<dbReference type="eggNOG" id="COG0169">
    <property type="taxonomic scope" value="Bacteria"/>
</dbReference>
<dbReference type="HOGENOM" id="CLU_044063_4_1_9"/>
<dbReference type="UniPathway" id="UPA00053">
    <property type="reaction ID" value="UER00087"/>
</dbReference>
<dbReference type="Proteomes" id="UP000001374">
    <property type="component" value="Chromosome"/>
</dbReference>
<dbReference type="GO" id="GO:0005829">
    <property type="term" value="C:cytosol"/>
    <property type="evidence" value="ECO:0007669"/>
    <property type="project" value="TreeGrafter"/>
</dbReference>
<dbReference type="GO" id="GO:0050661">
    <property type="term" value="F:NADP binding"/>
    <property type="evidence" value="ECO:0007669"/>
    <property type="project" value="InterPro"/>
</dbReference>
<dbReference type="GO" id="GO:0004764">
    <property type="term" value="F:shikimate 3-dehydrogenase (NADP+) activity"/>
    <property type="evidence" value="ECO:0007669"/>
    <property type="project" value="UniProtKB-UniRule"/>
</dbReference>
<dbReference type="GO" id="GO:0008652">
    <property type="term" value="P:amino acid biosynthetic process"/>
    <property type="evidence" value="ECO:0007669"/>
    <property type="project" value="UniProtKB-KW"/>
</dbReference>
<dbReference type="GO" id="GO:0009073">
    <property type="term" value="P:aromatic amino acid family biosynthetic process"/>
    <property type="evidence" value="ECO:0007669"/>
    <property type="project" value="UniProtKB-KW"/>
</dbReference>
<dbReference type="GO" id="GO:0009423">
    <property type="term" value="P:chorismate biosynthetic process"/>
    <property type="evidence" value="ECO:0007669"/>
    <property type="project" value="UniProtKB-UniRule"/>
</dbReference>
<dbReference type="GO" id="GO:0019632">
    <property type="term" value="P:shikimate metabolic process"/>
    <property type="evidence" value="ECO:0007669"/>
    <property type="project" value="InterPro"/>
</dbReference>
<dbReference type="CDD" id="cd01065">
    <property type="entry name" value="NAD_bind_Shikimate_DH"/>
    <property type="match status" value="1"/>
</dbReference>
<dbReference type="FunFam" id="3.40.50.720:FF:000853">
    <property type="entry name" value="Shikimate dehydrogenase (NADP(+))"/>
    <property type="match status" value="1"/>
</dbReference>
<dbReference type="Gene3D" id="3.40.50.10860">
    <property type="entry name" value="Leucine Dehydrogenase, chain A, domain 1"/>
    <property type="match status" value="1"/>
</dbReference>
<dbReference type="Gene3D" id="3.40.50.720">
    <property type="entry name" value="NAD(P)-binding Rossmann-like Domain"/>
    <property type="match status" value="1"/>
</dbReference>
<dbReference type="HAMAP" id="MF_00222">
    <property type="entry name" value="Shikimate_DH_AroE"/>
    <property type="match status" value="1"/>
</dbReference>
<dbReference type="InterPro" id="IPR046346">
    <property type="entry name" value="Aminoacid_DH-like_N_sf"/>
</dbReference>
<dbReference type="InterPro" id="IPR036291">
    <property type="entry name" value="NAD(P)-bd_dom_sf"/>
</dbReference>
<dbReference type="InterPro" id="IPR011342">
    <property type="entry name" value="Shikimate_DH"/>
</dbReference>
<dbReference type="InterPro" id="IPR013708">
    <property type="entry name" value="Shikimate_DH-bd_N"/>
</dbReference>
<dbReference type="InterPro" id="IPR022893">
    <property type="entry name" value="Shikimate_DH_fam"/>
</dbReference>
<dbReference type="InterPro" id="IPR006151">
    <property type="entry name" value="Shikm_DH/Glu-tRNA_Rdtase"/>
</dbReference>
<dbReference type="NCBIfam" id="TIGR00507">
    <property type="entry name" value="aroE"/>
    <property type="match status" value="1"/>
</dbReference>
<dbReference type="PANTHER" id="PTHR21089:SF1">
    <property type="entry name" value="BIFUNCTIONAL 3-DEHYDROQUINATE DEHYDRATASE_SHIKIMATE DEHYDROGENASE, CHLOROPLASTIC"/>
    <property type="match status" value="1"/>
</dbReference>
<dbReference type="PANTHER" id="PTHR21089">
    <property type="entry name" value="SHIKIMATE DEHYDROGENASE"/>
    <property type="match status" value="1"/>
</dbReference>
<dbReference type="Pfam" id="PF01488">
    <property type="entry name" value="Shikimate_DH"/>
    <property type="match status" value="1"/>
</dbReference>
<dbReference type="Pfam" id="PF08501">
    <property type="entry name" value="Shikimate_dh_N"/>
    <property type="match status" value="1"/>
</dbReference>
<dbReference type="SUPFAM" id="SSF53223">
    <property type="entry name" value="Aminoacid dehydrogenase-like, N-terminal domain"/>
    <property type="match status" value="1"/>
</dbReference>
<dbReference type="SUPFAM" id="SSF51735">
    <property type="entry name" value="NAD(P)-binding Rossmann-fold domains"/>
    <property type="match status" value="1"/>
</dbReference>
<name>AROE_CLOBJ</name>
<sequence>MYTTGLIGKNINYSESPEIHNNYYKKNNIPFFYKIFNLKQDQIDDFIKNLHKNNIKGFNVTIPYKETILQYLNDIVYPADKIGAVNTVAVQEDKLIGYNTDYIGFIKSLQYYNIQVKNFKCLIIGSGGSAKCIYYALKELNARDICIVSRNPEKARLKFEKKVKILNIKDENKLDRYDLIVNCTPIGGPNLKEQKPIELKEIKKNCVVYDLNYTPKRSKLLKEAKENGAFIINGEKMLIFQAYSAIGLWCLNGIKGGR</sequence>
<keyword id="KW-0028">Amino-acid biosynthesis</keyword>
<keyword id="KW-0057">Aromatic amino acid biosynthesis</keyword>
<keyword id="KW-0521">NADP</keyword>
<keyword id="KW-0560">Oxidoreductase</keyword>
<comment type="function">
    <text evidence="1">Involved in the biosynthesis of the chorismate, which leads to the biosynthesis of aromatic amino acids. Catalyzes the reversible NADPH linked reduction of 3-dehydroshikimate (DHSA) to yield shikimate (SA).</text>
</comment>
<comment type="catalytic activity">
    <reaction evidence="1">
        <text>shikimate + NADP(+) = 3-dehydroshikimate + NADPH + H(+)</text>
        <dbReference type="Rhea" id="RHEA:17737"/>
        <dbReference type="ChEBI" id="CHEBI:15378"/>
        <dbReference type="ChEBI" id="CHEBI:16630"/>
        <dbReference type="ChEBI" id="CHEBI:36208"/>
        <dbReference type="ChEBI" id="CHEBI:57783"/>
        <dbReference type="ChEBI" id="CHEBI:58349"/>
        <dbReference type="EC" id="1.1.1.25"/>
    </reaction>
</comment>
<comment type="pathway">
    <text evidence="1">Metabolic intermediate biosynthesis; chorismate biosynthesis; chorismate from D-erythrose 4-phosphate and phosphoenolpyruvate: step 4/7.</text>
</comment>
<comment type="subunit">
    <text evidence="1">Homodimer.</text>
</comment>
<comment type="similarity">
    <text evidence="1">Belongs to the shikimate dehydrogenase family.</text>
</comment>
<accession>C1FSW2</accession>
<gene>
    <name evidence="1" type="primary">aroE</name>
    <name type="ordered locus">CLM_2844</name>
</gene>
<organism>
    <name type="scientific">Clostridium botulinum (strain Kyoto / Type A2)</name>
    <dbReference type="NCBI Taxonomy" id="536232"/>
    <lineage>
        <taxon>Bacteria</taxon>
        <taxon>Bacillati</taxon>
        <taxon>Bacillota</taxon>
        <taxon>Clostridia</taxon>
        <taxon>Eubacteriales</taxon>
        <taxon>Clostridiaceae</taxon>
        <taxon>Clostridium</taxon>
    </lineage>
</organism>
<feature type="chain" id="PRO_1000124881" description="Shikimate dehydrogenase (NADP(+))">
    <location>
        <begin position="1"/>
        <end position="258"/>
    </location>
</feature>
<feature type="active site" description="Proton acceptor" evidence="1">
    <location>
        <position position="65"/>
    </location>
</feature>
<feature type="binding site" evidence="1">
    <location>
        <begin position="14"/>
        <end position="16"/>
    </location>
    <ligand>
        <name>shikimate</name>
        <dbReference type="ChEBI" id="CHEBI:36208"/>
    </ligand>
</feature>
<feature type="binding site" evidence="1">
    <location>
        <position position="61"/>
    </location>
    <ligand>
        <name>shikimate</name>
        <dbReference type="ChEBI" id="CHEBI:36208"/>
    </ligand>
</feature>
<feature type="binding site" evidence="1">
    <location>
        <position position="86"/>
    </location>
    <ligand>
        <name>shikimate</name>
        <dbReference type="ChEBI" id="CHEBI:36208"/>
    </ligand>
</feature>
<feature type="binding site" evidence="1">
    <location>
        <position position="101"/>
    </location>
    <ligand>
        <name>shikimate</name>
        <dbReference type="ChEBI" id="CHEBI:36208"/>
    </ligand>
</feature>
<feature type="binding site" evidence="1">
    <location>
        <begin position="125"/>
        <end position="129"/>
    </location>
    <ligand>
        <name>NADP(+)</name>
        <dbReference type="ChEBI" id="CHEBI:58349"/>
    </ligand>
</feature>
<feature type="binding site" evidence="1">
    <location>
        <position position="211"/>
    </location>
    <ligand>
        <name>NADP(+)</name>
        <dbReference type="ChEBI" id="CHEBI:58349"/>
    </ligand>
</feature>
<feature type="binding site" evidence="1">
    <location>
        <position position="213"/>
    </location>
    <ligand>
        <name>shikimate</name>
        <dbReference type="ChEBI" id="CHEBI:36208"/>
    </ligand>
</feature>
<feature type="binding site" evidence="1">
    <location>
        <position position="234"/>
    </location>
    <ligand>
        <name>NADP(+)</name>
        <dbReference type="ChEBI" id="CHEBI:58349"/>
    </ligand>
</feature>
<protein>
    <recommendedName>
        <fullName evidence="1">Shikimate dehydrogenase (NADP(+))</fullName>
        <shortName evidence="1">SDH</shortName>
        <ecNumber evidence="1">1.1.1.25</ecNumber>
    </recommendedName>
</protein>
<evidence type="ECO:0000255" key="1">
    <source>
        <dbReference type="HAMAP-Rule" id="MF_00222"/>
    </source>
</evidence>
<proteinExistence type="inferred from homology"/>